<keyword id="KW-1185">Reference proteome</keyword>
<keyword id="KW-0687">Ribonucleoprotein</keyword>
<keyword id="KW-0689">Ribosomal protein</keyword>
<reference key="1">
    <citation type="journal article" date="2009" name="J. Bacteriol.">
        <title>Complete genome sequence of Macrococcus caseolyticus strain JCSCS5402, reflecting the ancestral genome of the human-pathogenic staphylococci.</title>
        <authorList>
            <person name="Baba T."/>
            <person name="Kuwahara-Arai K."/>
            <person name="Uchiyama I."/>
            <person name="Takeuchi F."/>
            <person name="Ito T."/>
            <person name="Hiramatsu K."/>
        </authorList>
    </citation>
    <scope>NUCLEOTIDE SEQUENCE [LARGE SCALE GENOMIC DNA]</scope>
    <source>
        <strain>JCSC5402</strain>
    </source>
</reference>
<comment type="function">
    <text evidence="1">This protein is one of the early assembly proteins of the 50S ribosomal subunit, although it is not seen to bind rRNA by itself. It is important during the early stages of 50S assembly.</text>
</comment>
<comment type="subunit">
    <text evidence="1">Part of the 50S ribosomal subunit.</text>
</comment>
<comment type="similarity">
    <text evidence="1">Belongs to the universal ribosomal protein uL13 family.</text>
</comment>
<proteinExistence type="inferred from homology"/>
<organism>
    <name type="scientific">Macrococcus caseolyticus (strain JCSC5402)</name>
    <name type="common">Macrococcoides caseolyticum</name>
    <dbReference type="NCBI Taxonomy" id="458233"/>
    <lineage>
        <taxon>Bacteria</taxon>
        <taxon>Bacillati</taxon>
        <taxon>Bacillota</taxon>
        <taxon>Bacilli</taxon>
        <taxon>Bacillales</taxon>
        <taxon>Staphylococcaceae</taxon>
        <taxon>Macrococcoides</taxon>
    </lineage>
</organism>
<accession>B9E9M3</accession>
<feature type="chain" id="PRO_1000166873" description="Large ribosomal subunit protein uL13">
    <location>
        <begin position="1"/>
        <end position="145"/>
    </location>
</feature>
<gene>
    <name evidence="1" type="primary">rplM</name>
    <name type="ordered locus">MCCL_0227</name>
</gene>
<evidence type="ECO:0000255" key="1">
    <source>
        <dbReference type="HAMAP-Rule" id="MF_01366"/>
    </source>
</evidence>
<evidence type="ECO:0000305" key="2"/>
<dbReference type="EMBL" id="AP009484">
    <property type="protein sequence ID" value="BAH16934.1"/>
    <property type="molecule type" value="Genomic_DNA"/>
</dbReference>
<dbReference type="RefSeq" id="WP_012656135.1">
    <property type="nucleotide sequence ID" value="NC_011999.1"/>
</dbReference>
<dbReference type="SMR" id="B9E9M3"/>
<dbReference type="STRING" id="458233.MCCL_0227"/>
<dbReference type="GeneID" id="61130650"/>
<dbReference type="KEGG" id="mcl:MCCL_0227"/>
<dbReference type="eggNOG" id="COG0102">
    <property type="taxonomic scope" value="Bacteria"/>
</dbReference>
<dbReference type="HOGENOM" id="CLU_082184_2_2_9"/>
<dbReference type="OrthoDB" id="9801330at2"/>
<dbReference type="Proteomes" id="UP000001383">
    <property type="component" value="Chromosome"/>
</dbReference>
<dbReference type="GO" id="GO:0022625">
    <property type="term" value="C:cytosolic large ribosomal subunit"/>
    <property type="evidence" value="ECO:0007669"/>
    <property type="project" value="TreeGrafter"/>
</dbReference>
<dbReference type="GO" id="GO:0003729">
    <property type="term" value="F:mRNA binding"/>
    <property type="evidence" value="ECO:0007669"/>
    <property type="project" value="TreeGrafter"/>
</dbReference>
<dbReference type="GO" id="GO:0003735">
    <property type="term" value="F:structural constituent of ribosome"/>
    <property type="evidence" value="ECO:0007669"/>
    <property type="project" value="InterPro"/>
</dbReference>
<dbReference type="GO" id="GO:0017148">
    <property type="term" value="P:negative regulation of translation"/>
    <property type="evidence" value="ECO:0007669"/>
    <property type="project" value="TreeGrafter"/>
</dbReference>
<dbReference type="GO" id="GO:0006412">
    <property type="term" value="P:translation"/>
    <property type="evidence" value="ECO:0007669"/>
    <property type="project" value="UniProtKB-UniRule"/>
</dbReference>
<dbReference type="CDD" id="cd00392">
    <property type="entry name" value="Ribosomal_L13"/>
    <property type="match status" value="1"/>
</dbReference>
<dbReference type="FunFam" id="3.90.1180.10:FF:000001">
    <property type="entry name" value="50S ribosomal protein L13"/>
    <property type="match status" value="1"/>
</dbReference>
<dbReference type="Gene3D" id="3.90.1180.10">
    <property type="entry name" value="Ribosomal protein L13"/>
    <property type="match status" value="1"/>
</dbReference>
<dbReference type="HAMAP" id="MF_01366">
    <property type="entry name" value="Ribosomal_uL13"/>
    <property type="match status" value="1"/>
</dbReference>
<dbReference type="InterPro" id="IPR005822">
    <property type="entry name" value="Ribosomal_uL13"/>
</dbReference>
<dbReference type="InterPro" id="IPR005823">
    <property type="entry name" value="Ribosomal_uL13_bac-type"/>
</dbReference>
<dbReference type="InterPro" id="IPR036899">
    <property type="entry name" value="Ribosomal_uL13_sf"/>
</dbReference>
<dbReference type="NCBIfam" id="TIGR01066">
    <property type="entry name" value="rplM_bact"/>
    <property type="match status" value="1"/>
</dbReference>
<dbReference type="PANTHER" id="PTHR11545:SF2">
    <property type="entry name" value="LARGE RIBOSOMAL SUBUNIT PROTEIN UL13M"/>
    <property type="match status" value="1"/>
</dbReference>
<dbReference type="PANTHER" id="PTHR11545">
    <property type="entry name" value="RIBOSOMAL PROTEIN L13"/>
    <property type="match status" value="1"/>
</dbReference>
<dbReference type="Pfam" id="PF00572">
    <property type="entry name" value="Ribosomal_L13"/>
    <property type="match status" value="1"/>
</dbReference>
<dbReference type="PIRSF" id="PIRSF002181">
    <property type="entry name" value="Ribosomal_L13"/>
    <property type="match status" value="1"/>
</dbReference>
<dbReference type="SUPFAM" id="SSF52161">
    <property type="entry name" value="Ribosomal protein L13"/>
    <property type="match status" value="1"/>
</dbReference>
<protein>
    <recommendedName>
        <fullName evidence="1">Large ribosomal subunit protein uL13</fullName>
    </recommendedName>
    <alternativeName>
        <fullName evidence="2">50S ribosomal protein L13</fullName>
    </alternativeName>
</protein>
<sequence>MRQTFMANESNIDRKWYVIDAEGKTMGRLSSEVASILRGKHKPTFTPHVDCGDHVILINAEKIYLSGNKAEDKIYYRHSNHPGGIKSISAGELREKNPVRLMETSIKGMLPKGSLGDKMFKKLHVYAGAEHPHTAQQPENYELRG</sequence>
<name>RL13_MACCJ</name>